<keyword id="KW-0012">Acyltransferase</keyword>
<keyword id="KW-0028">Amino-acid biosynthesis</keyword>
<keyword id="KW-0496">Mitochondrion</keyword>
<keyword id="KW-1185">Reference proteome</keyword>
<keyword id="KW-0808">Transferase</keyword>
<keyword id="KW-0809">Transit peptide</keyword>
<comment type="function">
    <text evidence="1">N-acetylglutamate synthase involved in arginine biosynthesis.</text>
</comment>
<comment type="catalytic activity">
    <reaction>
        <text>L-glutamate + acetyl-CoA = N-acetyl-L-glutamate + CoA + H(+)</text>
        <dbReference type="Rhea" id="RHEA:24292"/>
        <dbReference type="ChEBI" id="CHEBI:15378"/>
        <dbReference type="ChEBI" id="CHEBI:29985"/>
        <dbReference type="ChEBI" id="CHEBI:44337"/>
        <dbReference type="ChEBI" id="CHEBI:57287"/>
        <dbReference type="ChEBI" id="CHEBI:57288"/>
        <dbReference type="EC" id="2.3.1.1"/>
    </reaction>
</comment>
<comment type="pathway">
    <text>Amino-acid biosynthesis; L-arginine biosynthesis; N(2)-acetyl-L-ornithine from L-glutamate: step 1/4.</text>
</comment>
<comment type="subcellular location">
    <subcellularLocation>
        <location evidence="1">Mitochondrion</location>
    </subcellularLocation>
</comment>
<comment type="similarity">
    <text evidence="4">Belongs to the acetyltransferase family.</text>
</comment>
<protein>
    <recommendedName>
        <fullName>Amino-acid acetyltransferase, mitochondrial</fullName>
        <ecNumber>2.3.1.1</ecNumber>
    </recommendedName>
    <alternativeName>
        <fullName>Arginine-requiring protein 2</fullName>
    </alternativeName>
    <alternativeName>
        <fullName>Glutamate N-acetyltransferase</fullName>
    </alternativeName>
    <alternativeName>
        <fullName>N-acetylglutamate synthase</fullName>
        <shortName>AGS</shortName>
        <shortName>NAGS</shortName>
    </alternativeName>
</protein>
<name>NAGS_YARLI</name>
<organism>
    <name type="scientific">Yarrowia lipolytica (strain CLIB 122 / E 150)</name>
    <name type="common">Yeast</name>
    <name type="synonym">Candida lipolytica</name>
    <dbReference type="NCBI Taxonomy" id="284591"/>
    <lineage>
        <taxon>Eukaryota</taxon>
        <taxon>Fungi</taxon>
        <taxon>Dikarya</taxon>
        <taxon>Ascomycota</taxon>
        <taxon>Saccharomycotina</taxon>
        <taxon>Dipodascomycetes</taxon>
        <taxon>Dipodascales</taxon>
        <taxon>Dipodascales incertae sedis</taxon>
        <taxon>Yarrowia</taxon>
    </lineage>
</organism>
<reference key="1">
    <citation type="journal article" date="2004" name="Nature">
        <title>Genome evolution in yeasts.</title>
        <authorList>
            <person name="Dujon B."/>
            <person name="Sherman D."/>
            <person name="Fischer G."/>
            <person name="Durrens P."/>
            <person name="Casaregola S."/>
            <person name="Lafontaine I."/>
            <person name="de Montigny J."/>
            <person name="Marck C."/>
            <person name="Neuveglise C."/>
            <person name="Talla E."/>
            <person name="Goffard N."/>
            <person name="Frangeul L."/>
            <person name="Aigle M."/>
            <person name="Anthouard V."/>
            <person name="Babour A."/>
            <person name="Barbe V."/>
            <person name="Barnay S."/>
            <person name="Blanchin S."/>
            <person name="Beckerich J.-M."/>
            <person name="Beyne E."/>
            <person name="Bleykasten C."/>
            <person name="Boisrame A."/>
            <person name="Boyer J."/>
            <person name="Cattolico L."/>
            <person name="Confanioleri F."/>
            <person name="de Daruvar A."/>
            <person name="Despons L."/>
            <person name="Fabre E."/>
            <person name="Fairhead C."/>
            <person name="Ferry-Dumazet H."/>
            <person name="Groppi A."/>
            <person name="Hantraye F."/>
            <person name="Hennequin C."/>
            <person name="Jauniaux N."/>
            <person name="Joyet P."/>
            <person name="Kachouri R."/>
            <person name="Kerrest A."/>
            <person name="Koszul R."/>
            <person name="Lemaire M."/>
            <person name="Lesur I."/>
            <person name="Ma L."/>
            <person name="Muller H."/>
            <person name="Nicaud J.-M."/>
            <person name="Nikolski M."/>
            <person name="Oztas S."/>
            <person name="Ozier-Kalogeropoulos O."/>
            <person name="Pellenz S."/>
            <person name="Potier S."/>
            <person name="Richard G.-F."/>
            <person name="Straub M.-L."/>
            <person name="Suleau A."/>
            <person name="Swennen D."/>
            <person name="Tekaia F."/>
            <person name="Wesolowski-Louvel M."/>
            <person name="Westhof E."/>
            <person name="Wirth B."/>
            <person name="Zeniou-Meyer M."/>
            <person name="Zivanovic Y."/>
            <person name="Bolotin-Fukuhara M."/>
            <person name="Thierry A."/>
            <person name="Bouchier C."/>
            <person name="Caudron B."/>
            <person name="Scarpelli C."/>
            <person name="Gaillardin C."/>
            <person name="Weissenbach J."/>
            <person name="Wincker P."/>
            <person name="Souciet J.-L."/>
        </authorList>
    </citation>
    <scope>NUCLEOTIDE SEQUENCE [LARGE SCALE GENOMIC DNA]</scope>
    <source>
        <strain>CLIB 122 / E 150</strain>
    </source>
</reference>
<accession>Q6CEE1</accession>
<dbReference type="EC" id="2.3.1.1"/>
<dbReference type="EMBL" id="CR382128">
    <property type="protein sequence ID" value="CAG83224.1"/>
    <property type="molecule type" value="Genomic_DNA"/>
</dbReference>
<dbReference type="RefSeq" id="XP_500971.1">
    <property type="nucleotide sequence ID" value="XM_500971.1"/>
</dbReference>
<dbReference type="SMR" id="Q6CEE1"/>
<dbReference type="FunCoup" id="Q6CEE1">
    <property type="interactions" value="103"/>
</dbReference>
<dbReference type="STRING" id="284591.Q6CEE1"/>
<dbReference type="EnsemblFungi" id="CAG83224">
    <property type="protein sequence ID" value="CAG83224"/>
    <property type="gene ID" value="YALI0_B16390g"/>
</dbReference>
<dbReference type="KEGG" id="yli:2907516"/>
<dbReference type="VEuPathDB" id="FungiDB:YALI0_B16390g"/>
<dbReference type="HOGENOM" id="CLU_013088_0_0_1"/>
<dbReference type="InParanoid" id="Q6CEE1"/>
<dbReference type="OMA" id="NAMVRDC"/>
<dbReference type="OrthoDB" id="90508at4891"/>
<dbReference type="UniPathway" id="UPA00068">
    <property type="reaction ID" value="UER00106"/>
</dbReference>
<dbReference type="Proteomes" id="UP000001300">
    <property type="component" value="Chromosome B"/>
</dbReference>
<dbReference type="GO" id="GO:0005759">
    <property type="term" value="C:mitochondrial matrix"/>
    <property type="evidence" value="ECO:0000318"/>
    <property type="project" value="GO_Central"/>
</dbReference>
<dbReference type="GO" id="GO:0004042">
    <property type="term" value="F:L-glutamate N-acetyltransferase activity"/>
    <property type="evidence" value="ECO:0000318"/>
    <property type="project" value="GO_Central"/>
</dbReference>
<dbReference type="GO" id="GO:0006526">
    <property type="term" value="P:L-arginine biosynthetic process"/>
    <property type="evidence" value="ECO:0000318"/>
    <property type="project" value="GO_Central"/>
</dbReference>
<dbReference type="GO" id="GO:0006592">
    <property type="term" value="P:ornithine biosynthetic process"/>
    <property type="evidence" value="ECO:0000318"/>
    <property type="project" value="GO_Central"/>
</dbReference>
<dbReference type="Gene3D" id="3.40.630.30">
    <property type="match status" value="1"/>
</dbReference>
<dbReference type="Gene3D" id="3.40.1160.10">
    <property type="entry name" value="Acetylglutamate kinase-like"/>
    <property type="match status" value="1"/>
</dbReference>
<dbReference type="InterPro" id="IPR036393">
    <property type="entry name" value="AceGlu_kinase-like_sf"/>
</dbReference>
<dbReference type="InterPro" id="IPR011190">
    <property type="entry name" value="GlcNAc_Synth_fun"/>
</dbReference>
<dbReference type="InterPro" id="IPR006855">
    <property type="entry name" value="Vertebrate-like_GNAT_dom"/>
</dbReference>
<dbReference type="PANTHER" id="PTHR23342:SF4">
    <property type="entry name" value="AMINO-ACID ACETYLTRANSFERASE, MITOCHONDRIAL"/>
    <property type="match status" value="1"/>
</dbReference>
<dbReference type="PANTHER" id="PTHR23342">
    <property type="entry name" value="N-ACETYLGLUTAMATE SYNTHASE"/>
    <property type="match status" value="1"/>
</dbReference>
<dbReference type="Pfam" id="PF04768">
    <property type="entry name" value="NAT"/>
    <property type="match status" value="1"/>
</dbReference>
<dbReference type="PIRSF" id="PIRSF007892">
    <property type="entry name" value="NAGS_fungal"/>
    <property type="match status" value="1"/>
</dbReference>
<dbReference type="PROSITE" id="PS51731">
    <property type="entry name" value="GNAT_NAGS"/>
    <property type="match status" value="1"/>
</dbReference>
<proteinExistence type="inferred from homology"/>
<evidence type="ECO:0000250" key="1"/>
<evidence type="ECO:0000255" key="2"/>
<evidence type="ECO:0000255" key="3">
    <source>
        <dbReference type="PROSITE-ProRule" id="PRU00532"/>
    </source>
</evidence>
<evidence type="ECO:0000305" key="4"/>
<feature type="transit peptide" description="Mitochondrion" evidence="2">
    <location>
        <begin position="1"/>
        <end status="unknown"/>
    </location>
</feature>
<feature type="chain" id="PRO_0000372583" description="Amino-acid acetyltransferase, mitochondrial">
    <location>
        <begin status="unknown"/>
        <end position="608"/>
    </location>
</feature>
<feature type="domain" description="N-acetyltransferase" evidence="3">
    <location>
        <begin position="402"/>
        <end position="604"/>
    </location>
</feature>
<gene>
    <name type="primary">ARG2</name>
    <name type="ordered locus">YALI0B16390g</name>
</gene>
<sequence>MLRSSRITAGTCVSRGWHSYTTKTPTKTAIPPAAKSSNEAKDLILSVLQSAATKREAKTYISRYAPLTGVELQKKKEGLVQRLLGVGKEQDNKEIENLTGHAPEGLLGDSEGTLRVAIIKIRDIKSIEDDLIAQMGETIARLSRLGVSPIVVVDAGKARNDFLKLDNKPFRHYQKLILQKVFKISDAIDAASPDVGARPIEGLFSMNKKGLRLAMPQMLMHPLSHGKVPVLAPLAYDDVTSEEKLVMADDVVHFLTQKLAEVPANILSVEKIIFVDPLGGIPSVERSGAHVFVNLKQELSDIAAELHMGFIPPAQREVHLANLKAMHKALKFLPPTASGLITTPAVAAIPSVGRNPIIYNVLTDRPVISPSLPVELKKTPTLETTLLREGMPVITLKSDKGLNLITEHEKGNIDLDRLWHLIEDSFGRRIDKQHYLNRVNGKIAGIIIAGDYEGAAIITWEDIDPVKAQEDRDAADRAAAEAAAAYAAGIPLPSPPLYQKLGDAVPLNPNQVAYLDKFAVLKRSQGSSSVADVVFKGMVMSQFPNELLWRSRKNNPVNKWYFDRSKGSFKIPGSEWCMFWTGRKTREQYLERFVDICTRIEPSLREEL</sequence>